<dbReference type="EMBL" id="CP000447">
    <property type="protein sequence ID" value="ABI69890.1"/>
    <property type="molecule type" value="Genomic_DNA"/>
</dbReference>
<dbReference type="RefSeq" id="WP_011635519.1">
    <property type="nucleotide sequence ID" value="NC_008345.1"/>
</dbReference>
<dbReference type="SMR" id="Q08A25"/>
<dbReference type="STRING" id="318167.Sfri_0027"/>
<dbReference type="KEGG" id="sfr:Sfri_0027"/>
<dbReference type="eggNOG" id="COG2922">
    <property type="taxonomic scope" value="Bacteria"/>
</dbReference>
<dbReference type="HOGENOM" id="CLU_133242_0_0_6"/>
<dbReference type="OrthoDB" id="9788984at2"/>
<dbReference type="Proteomes" id="UP000000684">
    <property type="component" value="Chromosome"/>
</dbReference>
<dbReference type="HAMAP" id="MF_00598">
    <property type="entry name" value="Smg"/>
    <property type="match status" value="1"/>
</dbReference>
<dbReference type="InterPro" id="IPR007456">
    <property type="entry name" value="Smg"/>
</dbReference>
<dbReference type="NCBIfam" id="NF002897">
    <property type="entry name" value="PRK03430.1"/>
    <property type="match status" value="1"/>
</dbReference>
<dbReference type="PANTHER" id="PTHR38692">
    <property type="entry name" value="PROTEIN SMG"/>
    <property type="match status" value="1"/>
</dbReference>
<dbReference type="PANTHER" id="PTHR38692:SF1">
    <property type="entry name" value="PROTEIN SMG"/>
    <property type="match status" value="1"/>
</dbReference>
<dbReference type="Pfam" id="PF04361">
    <property type="entry name" value="DUF494"/>
    <property type="match status" value="1"/>
</dbReference>
<sequence length="157" mass="18537">MFDILMYLFENYVHSEIELLVDEDELTKELTRAGFHQVDIIKALSWLEHLADLQESDKPYLCNHAQHSFRIYTKAEMAKLDVECRGFLLFLEQIQVLSVETREMVIDRVMELDEPTLELEDLKWVVLMVLFNVPGNESAYEQMEDLIFEQPEGRLHS</sequence>
<organism>
    <name type="scientific">Shewanella frigidimarina (strain NCIMB 400)</name>
    <dbReference type="NCBI Taxonomy" id="318167"/>
    <lineage>
        <taxon>Bacteria</taxon>
        <taxon>Pseudomonadati</taxon>
        <taxon>Pseudomonadota</taxon>
        <taxon>Gammaproteobacteria</taxon>
        <taxon>Alteromonadales</taxon>
        <taxon>Shewanellaceae</taxon>
        <taxon>Shewanella</taxon>
    </lineage>
</organism>
<comment type="similarity">
    <text evidence="1">Belongs to the Smg family.</text>
</comment>
<name>SMG_SHEFN</name>
<reference key="1">
    <citation type="submission" date="2006-08" db="EMBL/GenBank/DDBJ databases">
        <title>Complete sequence of Shewanella frigidimarina NCIMB 400.</title>
        <authorList>
            <consortium name="US DOE Joint Genome Institute"/>
            <person name="Copeland A."/>
            <person name="Lucas S."/>
            <person name="Lapidus A."/>
            <person name="Barry K."/>
            <person name="Detter J.C."/>
            <person name="Glavina del Rio T."/>
            <person name="Hammon N."/>
            <person name="Israni S."/>
            <person name="Dalin E."/>
            <person name="Tice H."/>
            <person name="Pitluck S."/>
            <person name="Fredrickson J.K."/>
            <person name="Kolker E."/>
            <person name="McCuel L.A."/>
            <person name="DiChristina T."/>
            <person name="Nealson K.H."/>
            <person name="Newman D."/>
            <person name="Tiedje J.M."/>
            <person name="Zhou J."/>
            <person name="Romine M.F."/>
            <person name="Culley D.E."/>
            <person name="Serres M."/>
            <person name="Chertkov O."/>
            <person name="Brettin T."/>
            <person name="Bruce D."/>
            <person name="Han C."/>
            <person name="Tapia R."/>
            <person name="Gilna P."/>
            <person name="Schmutz J."/>
            <person name="Larimer F."/>
            <person name="Land M."/>
            <person name="Hauser L."/>
            <person name="Kyrpides N."/>
            <person name="Mikhailova N."/>
            <person name="Richardson P."/>
        </authorList>
    </citation>
    <scope>NUCLEOTIDE SEQUENCE [LARGE SCALE GENOMIC DNA]</scope>
    <source>
        <strain>NCIMB 400</strain>
    </source>
</reference>
<protein>
    <recommendedName>
        <fullName evidence="1">Protein Smg homolog</fullName>
    </recommendedName>
</protein>
<feature type="chain" id="PRO_1000025666" description="Protein Smg homolog">
    <location>
        <begin position="1"/>
        <end position="157"/>
    </location>
</feature>
<evidence type="ECO:0000255" key="1">
    <source>
        <dbReference type="HAMAP-Rule" id="MF_00598"/>
    </source>
</evidence>
<proteinExistence type="inferred from homology"/>
<accession>Q08A25</accession>
<gene>
    <name evidence="1" type="primary">smg</name>
    <name type="ordered locus">Sfri_0027</name>
</gene>
<keyword id="KW-1185">Reference proteome</keyword>